<protein>
    <recommendedName>
        <fullName>Cell division control protein 31</fullName>
    </recommendedName>
    <alternativeName>
        <fullName>Nuclear pore protein CDC31</fullName>
    </alternativeName>
    <alternativeName>
        <fullName>Nucleoporin CDC31</fullName>
    </alternativeName>
</protein>
<proteinExistence type="evidence at protein level"/>
<organism>
    <name type="scientific">Saccharomyces cerevisiae (strain ATCC 204508 / S288c)</name>
    <name type="common">Baker's yeast</name>
    <dbReference type="NCBI Taxonomy" id="559292"/>
    <lineage>
        <taxon>Eukaryota</taxon>
        <taxon>Fungi</taxon>
        <taxon>Dikarya</taxon>
        <taxon>Ascomycota</taxon>
        <taxon>Saccharomycotina</taxon>
        <taxon>Saccharomycetes</taxon>
        <taxon>Saccharomycetales</taxon>
        <taxon>Saccharomycetaceae</taxon>
        <taxon>Saccharomyces</taxon>
    </lineage>
</organism>
<comment type="function">
    <text evidence="2 3 4 5 6 7 9">Functions as a component of the spindle pole body (SPB) half-bridge (PubMed:10684247, PubMed:11156974, PubMed:12486115, PubMed:14504268, PubMed:8070654). At the SPB, it is recruited by KAR1 and MPS3 to the SPB half-bridge and involved in the initial steps of SPB duplication (PubMed:11156974, PubMed:12486115, PubMed:14504268, PubMed:8070654). Also involved in connection with the protein kinase KIC1 in the maintenance of cell morphology and integrity (PubMed:9813095). May play a role in vesicle-mediated transport, in a VPS13-dependent manner (PubMed:28122955).</text>
</comment>
<comment type="subunit">
    <text evidence="2 4 5 6 9">Component of the spindle pole body (SPB), acting as the connector of microtubule arrays in the cytoplasm and the nucleoplasm, is involved in nuclear positioning before chromosome segregation, SPB separation, spindle formation, chromosome segregation, nuclear migration into the bud, nuclear reorientation after cytokinesis and nuclear fusion during conjugation. The SPB half-bridge, which is tightly associated with the cytoplasmic side of the nuclear envelope and the SPB, is playing a key role as the starting structure for and in the initiation of SPB duplication in G1. At the SPB half-bridge CDC31 interacts with KAR1, MPS3 and SFI1 (PubMed:12486115, PubMed:14504268). Interacts with KIC1 (PubMed:9813095). Interacts with VPS13 (PubMed:28122955). Associates with nuclear pore complexes (NPCs) (PubMed:10684247).</text>
</comment>
<comment type="interaction">
    <interactant intactId="EBI-4259">
        <id>P06704</id>
    </interactant>
    <interactant intactId="EBI-4259">
        <id>P06704</id>
        <label>CDC31</label>
    </interactant>
    <organismsDiffer>false</organismsDiffer>
    <experiments>2</experiments>
</comment>
<comment type="interaction">
    <interactant intactId="EBI-4259">
        <id>P06704</id>
    </interactant>
    <interactant intactId="EBI-25811">
        <id>P47069</id>
        <label>MPS3</label>
    </interactant>
    <organismsDiffer>false</organismsDiffer>
    <experiments>2</experiments>
</comment>
<comment type="interaction">
    <interactant intactId="EBI-4259">
        <id>P06704</id>
    </interactant>
    <interactant intactId="EBI-16425">
        <id>P46674</id>
        <label>SAC3</label>
    </interactant>
    <organismsDiffer>false</organismsDiffer>
    <experiments>10</experiments>
</comment>
<comment type="interaction">
    <interactant intactId="EBI-4259">
        <id>P06704</id>
    </interactant>
    <interactant intactId="EBI-2213082">
        <id>Q12369</id>
        <label>SFI1</label>
    </interactant>
    <organismsDiffer>false</organismsDiffer>
    <experiments>3</experiments>
</comment>
<comment type="interaction">
    <interactant intactId="EBI-4259">
        <id>P06704</id>
    </interactant>
    <interactant intactId="EBI-1251050">
        <id>Q6WNK7</id>
        <label>SUS1</label>
    </interactant>
    <organismsDiffer>false</organismsDiffer>
    <experiments>6</experiments>
</comment>
<comment type="interaction">
    <interactant intactId="EBI-4259">
        <id>P06704</id>
    </interactant>
    <interactant intactId="EBI-32097">
        <id>Q08231</id>
        <label>THP1</label>
    </interactant>
    <organismsDiffer>false</organismsDiffer>
    <experiments>4</experiments>
</comment>
<comment type="subcellular location">
    <subcellularLocation>
        <location evidence="2">Nucleus envelope</location>
    </subcellularLocation>
    <subcellularLocation>
        <location evidence="8">Cytoplasm</location>
        <location evidence="8">Cytoskeleton</location>
        <location evidence="8">Microtubule organizing center</location>
        <location evidence="8">Spindle pole body</location>
    </subcellularLocation>
    <text evidence="2 8">Spindle pole body, SPB half- bridge (PubMed:8188750). Interacts with the nuclear pore complex (NPCs) at the nucleus envelope (PubMed:10684247).</text>
</comment>
<comment type="similarity">
    <text evidence="10">Belongs to the centrin family.</text>
</comment>
<name>CDC31_YEAST</name>
<feature type="chain" id="PRO_0000073577" description="Cell division control protein 31">
    <location>
        <begin position="1"/>
        <end position="161"/>
    </location>
</feature>
<feature type="domain" description="EF-hand 1" evidence="1">
    <location>
        <begin position="20"/>
        <end position="55"/>
    </location>
</feature>
<feature type="domain" description="EF-hand 2" evidence="10">
    <location>
        <begin position="56"/>
        <end position="91"/>
    </location>
</feature>
<feature type="domain" description="EF-hand 3" evidence="1">
    <location>
        <begin position="93"/>
        <end position="128"/>
    </location>
</feature>
<feature type="domain" description="EF-hand 4" evidence="1">
    <location>
        <begin position="129"/>
        <end position="161"/>
    </location>
</feature>
<feature type="binding site" evidence="1">
    <location>
        <position position="33"/>
    </location>
    <ligand>
        <name>Ca(2+)</name>
        <dbReference type="ChEBI" id="CHEBI:29108"/>
        <label>1</label>
    </ligand>
</feature>
<feature type="binding site" evidence="1">
    <location>
        <position position="35"/>
    </location>
    <ligand>
        <name>Ca(2+)</name>
        <dbReference type="ChEBI" id="CHEBI:29108"/>
        <label>1</label>
    </ligand>
</feature>
<feature type="binding site" evidence="1">
    <location>
        <position position="37"/>
    </location>
    <ligand>
        <name>Ca(2+)</name>
        <dbReference type="ChEBI" id="CHEBI:29108"/>
        <label>1</label>
    </ligand>
</feature>
<feature type="binding site" evidence="1">
    <location>
        <position position="44"/>
    </location>
    <ligand>
        <name>Ca(2+)</name>
        <dbReference type="ChEBI" id="CHEBI:29108"/>
        <label>1</label>
    </ligand>
</feature>
<feature type="binding site" evidence="1">
    <location>
        <position position="142"/>
    </location>
    <ligand>
        <name>Ca(2+)</name>
        <dbReference type="ChEBI" id="CHEBI:29108"/>
        <label>2</label>
    </ligand>
</feature>
<feature type="binding site" evidence="1">
    <location>
        <position position="144"/>
    </location>
    <ligand>
        <name>Ca(2+)</name>
        <dbReference type="ChEBI" id="CHEBI:29108"/>
        <label>2</label>
    </ligand>
</feature>
<feature type="binding site" evidence="1">
    <location>
        <position position="146"/>
    </location>
    <ligand>
        <name>Ca(2+)</name>
        <dbReference type="ChEBI" id="CHEBI:29108"/>
        <label>2</label>
    </ligand>
</feature>
<feature type="binding site" evidence="1">
    <location>
        <position position="148"/>
    </location>
    <ligand>
        <name>Ca(2+)</name>
        <dbReference type="ChEBI" id="CHEBI:29108"/>
        <label>2</label>
    </ligand>
</feature>
<feature type="binding site" evidence="1">
    <location>
        <position position="153"/>
    </location>
    <ligand>
        <name>Ca(2+)</name>
        <dbReference type="ChEBI" id="CHEBI:29108"/>
        <label>2</label>
    </ligand>
</feature>
<feature type="modified residue" description="Phosphothreonine" evidence="11">
    <location>
        <position position="130"/>
    </location>
</feature>
<feature type="sequence conflict" description="In Ref. 1; AAA66893." evidence="10" ref="1">
    <original>K</original>
    <variation>L</variation>
    <location>
        <position position="77"/>
    </location>
</feature>
<feature type="sequence conflict" description="In Ref. 1; AAA66893." evidence="10" ref="1">
    <original>T</original>
    <variation>I</variation>
    <location>
        <position position="110"/>
    </location>
</feature>
<feature type="turn" evidence="12">
    <location>
        <begin position="10"/>
        <end position="16"/>
    </location>
</feature>
<feature type="helix" evidence="12">
    <location>
        <begin position="19"/>
        <end position="32"/>
    </location>
</feature>
<feature type="strand" evidence="12">
    <location>
        <begin position="36"/>
        <end position="40"/>
    </location>
</feature>
<feature type="helix" evidence="12">
    <location>
        <begin position="42"/>
        <end position="51"/>
    </location>
</feature>
<feature type="helix" evidence="12">
    <location>
        <begin position="58"/>
        <end position="68"/>
    </location>
</feature>
<feature type="strand" evidence="12">
    <location>
        <begin position="72"/>
        <end position="74"/>
    </location>
</feature>
<feature type="helix" evidence="12">
    <location>
        <begin position="78"/>
        <end position="90"/>
    </location>
</feature>
<feature type="helix" evidence="12">
    <location>
        <begin position="94"/>
        <end position="105"/>
    </location>
</feature>
<feature type="strand" evidence="12">
    <location>
        <begin position="110"/>
        <end position="113"/>
    </location>
</feature>
<feature type="helix" evidence="12">
    <location>
        <begin position="115"/>
        <end position="124"/>
    </location>
</feature>
<feature type="helix" evidence="12">
    <location>
        <begin position="131"/>
        <end position="139"/>
    </location>
</feature>
<feature type="strand" evidence="12">
    <location>
        <begin position="143"/>
        <end position="150"/>
    </location>
</feature>
<feature type="helix" evidence="12">
    <location>
        <begin position="151"/>
        <end position="160"/>
    </location>
</feature>
<dbReference type="EMBL" id="M14078">
    <property type="protein sequence ID" value="AAA66893.1"/>
    <property type="molecule type" value="Genomic_DNA"/>
</dbReference>
<dbReference type="EMBL" id="X74500">
    <property type="protein sequence ID" value="CAA52609.1"/>
    <property type="molecule type" value="Genomic_DNA"/>
</dbReference>
<dbReference type="EMBL" id="Z75165">
    <property type="protein sequence ID" value="CAA99479.1"/>
    <property type="molecule type" value="Genomic_DNA"/>
</dbReference>
<dbReference type="EMBL" id="AY558434">
    <property type="protein sequence ID" value="AAS56760.1"/>
    <property type="molecule type" value="Genomic_DNA"/>
</dbReference>
<dbReference type="EMBL" id="BK006948">
    <property type="protein sequence ID" value="DAA11024.1"/>
    <property type="molecule type" value="Genomic_DNA"/>
</dbReference>
<dbReference type="PIR" id="S47549">
    <property type="entry name" value="S47549"/>
</dbReference>
<dbReference type="RefSeq" id="NP_014900.3">
    <property type="nucleotide sequence ID" value="NM_001183676.3"/>
</dbReference>
<dbReference type="PDB" id="2DOQ">
    <property type="method" value="X-ray"/>
    <property type="resolution" value="3.00 A"/>
    <property type="chains" value="A/B/C=1-161"/>
</dbReference>
<dbReference type="PDB" id="2GV5">
    <property type="method" value="X-ray"/>
    <property type="resolution" value="3.00 A"/>
    <property type="chains" value="A/B/D/E=1-161"/>
</dbReference>
<dbReference type="PDB" id="3FWB">
    <property type="method" value="X-ray"/>
    <property type="resolution" value="2.50 A"/>
    <property type="chains" value="A=1-161"/>
</dbReference>
<dbReference type="PDB" id="3FWC">
    <property type="method" value="X-ray"/>
    <property type="resolution" value="2.70 A"/>
    <property type="chains" value="A/E/I/M=1-161"/>
</dbReference>
<dbReference type="PDB" id="4MBE">
    <property type="method" value="X-ray"/>
    <property type="resolution" value="2.61 A"/>
    <property type="chains" value="A/D=1-161"/>
</dbReference>
<dbReference type="PDBsum" id="2DOQ"/>
<dbReference type="PDBsum" id="2GV5"/>
<dbReference type="PDBsum" id="3FWB"/>
<dbReference type="PDBsum" id="3FWC"/>
<dbReference type="PDBsum" id="4MBE"/>
<dbReference type="SMR" id="P06704"/>
<dbReference type="BioGRID" id="34647">
    <property type="interactions" value="99"/>
</dbReference>
<dbReference type="ComplexPortal" id="CPX-1686">
    <property type="entry name" value="TREX-2 transcription-export complex"/>
</dbReference>
<dbReference type="DIP" id="DIP-2273N"/>
<dbReference type="FunCoup" id="P06704">
    <property type="interactions" value="1148"/>
</dbReference>
<dbReference type="IntAct" id="P06704">
    <property type="interactions" value="37"/>
</dbReference>
<dbReference type="MINT" id="P06704"/>
<dbReference type="STRING" id="4932.YOR257W"/>
<dbReference type="TCDB" id="1.I.1.1.1">
    <property type="family name" value="the nuclear pore complex (npc) family"/>
</dbReference>
<dbReference type="iPTMnet" id="P06704"/>
<dbReference type="PaxDb" id="4932-YOR257W"/>
<dbReference type="PeptideAtlas" id="P06704"/>
<dbReference type="EnsemblFungi" id="YOR257W_mRNA">
    <property type="protein sequence ID" value="YOR257W"/>
    <property type="gene ID" value="YOR257W"/>
</dbReference>
<dbReference type="GeneID" id="854431"/>
<dbReference type="KEGG" id="sce:YOR257W"/>
<dbReference type="AGR" id="SGD:S000005783"/>
<dbReference type="SGD" id="S000005783">
    <property type="gene designation" value="CDC31"/>
</dbReference>
<dbReference type="VEuPathDB" id="FungiDB:YOR257W"/>
<dbReference type="eggNOG" id="KOG0028">
    <property type="taxonomic scope" value="Eukaryota"/>
</dbReference>
<dbReference type="GeneTree" id="ENSGT00940000157995"/>
<dbReference type="HOGENOM" id="CLU_061288_18_1_1"/>
<dbReference type="InParanoid" id="P06704"/>
<dbReference type="OMA" id="EFFMIMK"/>
<dbReference type="OrthoDB" id="343296at2759"/>
<dbReference type="BioCyc" id="YEAST:G3O-33748-MONOMER"/>
<dbReference type="BioGRID-ORCS" id="854431">
    <property type="hits" value="3 hits in 10 CRISPR screens"/>
</dbReference>
<dbReference type="CD-CODE" id="876000F7">
    <property type="entry name" value="Centrosome"/>
</dbReference>
<dbReference type="EvolutionaryTrace" id="P06704"/>
<dbReference type="PRO" id="PR:P06704"/>
<dbReference type="Proteomes" id="UP000002311">
    <property type="component" value="Chromosome XV"/>
</dbReference>
<dbReference type="RNAct" id="P06704">
    <property type="molecule type" value="protein"/>
</dbReference>
<dbReference type="GO" id="GO:0005737">
    <property type="term" value="C:cytoplasm"/>
    <property type="evidence" value="ECO:0007669"/>
    <property type="project" value="UniProtKB-KW"/>
</dbReference>
<dbReference type="GO" id="GO:0005825">
    <property type="term" value="C:half bridge of spindle pole body"/>
    <property type="evidence" value="ECO:0000314"/>
    <property type="project" value="SGD"/>
</dbReference>
<dbReference type="GO" id="GO:0044732">
    <property type="term" value="C:mitotic spindle pole body"/>
    <property type="evidence" value="ECO:0000318"/>
    <property type="project" value="GO_Central"/>
</dbReference>
<dbReference type="GO" id="GO:0005635">
    <property type="term" value="C:nuclear envelope"/>
    <property type="evidence" value="ECO:0007669"/>
    <property type="project" value="UniProtKB-SubCell"/>
</dbReference>
<dbReference type="GO" id="GO:0070390">
    <property type="term" value="C:transcription export complex 2"/>
    <property type="evidence" value="ECO:0000314"/>
    <property type="project" value="SGD"/>
</dbReference>
<dbReference type="GO" id="GO:0005509">
    <property type="term" value="F:calcium ion binding"/>
    <property type="evidence" value="ECO:0000318"/>
    <property type="project" value="GO_Central"/>
</dbReference>
<dbReference type="GO" id="GO:0042802">
    <property type="term" value="F:identical protein binding"/>
    <property type="evidence" value="ECO:0000353"/>
    <property type="project" value="IntAct"/>
</dbReference>
<dbReference type="GO" id="GO:0008017">
    <property type="term" value="F:microtubule binding"/>
    <property type="evidence" value="ECO:0000318"/>
    <property type="project" value="GO_Central"/>
</dbReference>
<dbReference type="GO" id="GO:0051301">
    <property type="term" value="P:cell division"/>
    <property type="evidence" value="ECO:0007669"/>
    <property type="project" value="UniProtKB-KW"/>
</dbReference>
<dbReference type="GO" id="GO:0048193">
    <property type="term" value="P:Golgi vesicle transport"/>
    <property type="evidence" value="ECO:0000314"/>
    <property type="project" value="UniProtKB"/>
</dbReference>
<dbReference type="GO" id="GO:0000226">
    <property type="term" value="P:microtubule cytoskeleton organization"/>
    <property type="evidence" value="ECO:0000318"/>
    <property type="project" value="GO_Central"/>
</dbReference>
<dbReference type="GO" id="GO:0006406">
    <property type="term" value="P:mRNA export from nucleus"/>
    <property type="evidence" value="ECO:0000303"/>
    <property type="project" value="ComplexPortal"/>
</dbReference>
<dbReference type="GO" id="GO:0045944">
    <property type="term" value="P:positive regulation of transcription by RNA polymerase II"/>
    <property type="evidence" value="ECO:0000303"/>
    <property type="project" value="ComplexPortal"/>
</dbReference>
<dbReference type="GO" id="GO:0043161">
    <property type="term" value="P:proteasome-mediated ubiquitin-dependent protein catabolic process"/>
    <property type="evidence" value="ECO:0000315"/>
    <property type="project" value="SGD"/>
</dbReference>
<dbReference type="GO" id="GO:0030474">
    <property type="term" value="P:spindle pole body duplication"/>
    <property type="evidence" value="ECO:0000315"/>
    <property type="project" value="SGD"/>
</dbReference>
<dbReference type="CDD" id="cd00051">
    <property type="entry name" value="EFh"/>
    <property type="match status" value="1"/>
</dbReference>
<dbReference type="FunFam" id="1.10.238.10:FF:000352">
    <property type="entry name" value="Cell division control protein 31"/>
    <property type="match status" value="1"/>
</dbReference>
<dbReference type="FunFam" id="1.10.238.10:FF:000077">
    <property type="entry name" value="Centrin 1"/>
    <property type="match status" value="1"/>
</dbReference>
<dbReference type="Gene3D" id="1.10.238.10">
    <property type="entry name" value="EF-hand"/>
    <property type="match status" value="2"/>
</dbReference>
<dbReference type="InterPro" id="IPR050230">
    <property type="entry name" value="CALM/Myosin/TropC-like"/>
</dbReference>
<dbReference type="InterPro" id="IPR011992">
    <property type="entry name" value="EF-hand-dom_pair"/>
</dbReference>
<dbReference type="InterPro" id="IPR018247">
    <property type="entry name" value="EF_Hand_1_Ca_BS"/>
</dbReference>
<dbReference type="InterPro" id="IPR002048">
    <property type="entry name" value="EF_hand_dom"/>
</dbReference>
<dbReference type="PANTHER" id="PTHR23048:SF48">
    <property type="entry name" value="CENTRIN 3"/>
    <property type="match status" value="1"/>
</dbReference>
<dbReference type="PANTHER" id="PTHR23048">
    <property type="entry name" value="MYOSIN LIGHT CHAIN 1, 3"/>
    <property type="match status" value="1"/>
</dbReference>
<dbReference type="Pfam" id="PF13499">
    <property type="entry name" value="EF-hand_7"/>
    <property type="match status" value="2"/>
</dbReference>
<dbReference type="SMART" id="SM00054">
    <property type="entry name" value="EFh"/>
    <property type="match status" value="4"/>
</dbReference>
<dbReference type="SUPFAM" id="SSF47473">
    <property type="entry name" value="EF-hand"/>
    <property type="match status" value="1"/>
</dbReference>
<dbReference type="PROSITE" id="PS00018">
    <property type="entry name" value="EF_HAND_1"/>
    <property type="match status" value="2"/>
</dbReference>
<dbReference type="PROSITE" id="PS50222">
    <property type="entry name" value="EF_HAND_2"/>
    <property type="match status" value="3"/>
</dbReference>
<sequence length="161" mass="18751">MSKNRSSLQSGPLNSELLEEQKQEIYEAFSLFDMNNDGFLDYHELKVAMKALGFELPKREILDLIDEYDSEGRHLMKYDDFYIVMGEKILKRDPLDEIKRAFQLFDDDHTGKISIKNLRRVAKELGETLTDEELRAMIEEFDLDGDGEINENEFIAICTDS</sequence>
<gene>
    <name type="primary">CDC31</name>
    <name type="synonym">DSK1</name>
    <name type="ordered locus">YOR257W</name>
</gene>
<keyword id="KW-0002">3D-structure</keyword>
<keyword id="KW-0106">Calcium</keyword>
<keyword id="KW-0131">Cell cycle</keyword>
<keyword id="KW-0132">Cell division</keyword>
<keyword id="KW-0963">Cytoplasm</keyword>
<keyword id="KW-0206">Cytoskeleton</keyword>
<keyword id="KW-0479">Metal-binding</keyword>
<keyword id="KW-0498">Mitosis</keyword>
<keyword id="KW-0539">Nucleus</keyword>
<keyword id="KW-0597">Phosphoprotein</keyword>
<keyword id="KW-1185">Reference proteome</keyword>
<keyword id="KW-0677">Repeat</keyword>
<reference key="1">
    <citation type="journal article" date="1986" name="Proc. Natl. Acad. Sci. U.S.A.">
        <title>Yeast gene required for spindle pole body duplication: homology of its product with Ca2+-binding proteins.</title>
        <authorList>
            <person name="Baum P."/>
            <person name="Furlong C."/>
            <person name="Byers B."/>
        </authorList>
    </citation>
    <scope>NUCLEOTIDE SEQUENCE [GENOMIC DNA]</scope>
</reference>
<reference key="2">
    <citation type="journal article" date="1995" name="J. Cell Biol.">
        <title>The Cdc31p-binding protein Kar1p is a component of the half bridge of the yeast spindle pole body.</title>
        <authorList>
            <person name="Spang A."/>
            <person name="Courtney I."/>
            <person name="Grein K."/>
            <person name="Matzner M."/>
            <person name="Schiebel E."/>
        </authorList>
    </citation>
    <scope>NUCLEOTIDE SEQUENCE [GENOMIC DNA]</scope>
    <scope>CHARACTERIZATION</scope>
    <source>
        <strain>ATCC 204508 / S288c</strain>
    </source>
</reference>
<reference key="3">
    <citation type="journal article" date="1997" name="Yeast">
        <title>Sequencing analysis of a 36.8 kb fragment of yeast chromosome XV reveals 26 open reading frames including SEC63, CDC31, SUG2, GCD1, RBL2, PNT1, PAC1 and VPH1.</title>
        <authorList>
            <person name="Poirey R."/>
            <person name="Jauniaux J.-C."/>
        </authorList>
    </citation>
    <scope>NUCLEOTIDE SEQUENCE [GENOMIC DNA]</scope>
    <source>
        <strain>ATCC 96604 / S288c / FY1679</strain>
    </source>
</reference>
<reference key="4">
    <citation type="journal article" date="1997" name="Nature">
        <title>The nucleotide sequence of Saccharomyces cerevisiae chromosome XV.</title>
        <authorList>
            <person name="Dujon B."/>
            <person name="Albermann K."/>
            <person name="Aldea M."/>
            <person name="Alexandraki D."/>
            <person name="Ansorge W."/>
            <person name="Arino J."/>
            <person name="Benes V."/>
            <person name="Bohn C."/>
            <person name="Bolotin-Fukuhara M."/>
            <person name="Bordonne R."/>
            <person name="Boyer J."/>
            <person name="Camasses A."/>
            <person name="Casamayor A."/>
            <person name="Casas C."/>
            <person name="Cheret G."/>
            <person name="Cziepluch C."/>
            <person name="Daignan-Fornier B."/>
            <person name="Dang V.-D."/>
            <person name="de Haan M."/>
            <person name="Delius H."/>
            <person name="Durand P."/>
            <person name="Fairhead C."/>
            <person name="Feldmann H."/>
            <person name="Gaillon L."/>
            <person name="Galisson F."/>
            <person name="Gamo F.-J."/>
            <person name="Gancedo C."/>
            <person name="Goffeau A."/>
            <person name="Goulding S.E."/>
            <person name="Grivell L.A."/>
            <person name="Habbig B."/>
            <person name="Hand N.J."/>
            <person name="Hani J."/>
            <person name="Hattenhorst U."/>
            <person name="Hebling U."/>
            <person name="Hernando Y."/>
            <person name="Herrero E."/>
            <person name="Heumann K."/>
            <person name="Hiesel R."/>
            <person name="Hilger F."/>
            <person name="Hofmann B."/>
            <person name="Hollenberg C.P."/>
            <person name="Hughes B."/>
            <person name="Jauniaux J.-C."/>
            <person name="Kalogeropoulos A."/>
            <person name="Katsoulou C."/>
            <person name="Kordes E."/>
            <person name="Lafuente M.J."/>
            <person name="Landt O."/>
            <person name="Louis E.J."/>
            <person name="Maarse A.C."/>
            <person name="Madania A."/>
            <person name="Mannhaupt G."/>
            <person name="Marck C."/>
            <person name="Martin R.P."/>
            <person name="Mewes H.-W."/>
            <person name="Michaux G."/>
            <person name="Paces V."/>
            <person name="Parle-McDermott A.G."/>
            <person name="Pearson B.M."/>
            <person name="Perrin A."/>
            <person name="Pettersson B."/>
            <person name="Poch O."/>
            <person name="Pohl T.M."/>
            <person name="Poirey R."/>
            <person name="Portetelle D."/>
            <person name="Pujol A."/>
            <person name="Purnelle B."/>
            <person name="Ramezani Rad M."/>
            <person name="Rechmann S."/>
            <person name="Schwager C."/>
            <person name="Schweizer M."/>
            <person name="Sor F."/>
            <person name="Sterky F."/>
            <person name="Tarassov I.A."/>
            <person name="Teodoru C."/>
            <person name="Tettelin H."/>
            <person name="Thierry A."/>
            <person name="Tobiasch E."/>
            <person name="Tzermia M."/>
            <person name="Uhlen M."/>
            <person name="Unseld M."/>
            <person name="Valens M."/>
            <person name="Vandenbol M."/>
            <person name="Vetter I."/>
            <person name="Vlcek C."/>
            <person name="Voet M."/>
            <person name="Volckaert G."/>
            <person name="Voss H."/>
            <person name="Wambutt R."/>
            <person name="Wedler H."/>
            <person name="Wiemann S."/>
            <person name="Winsor B."/>
            <person name="Wolfe K.H."/>
            <person name="Zollner A."/>
            <person name="Zumstein E."/>
            <person name="Kleine K."/>
        </authorList>
    </citation>
    <scope>NUCLEOTIDE SEQUENCE [LARGE SCALE GENOMIC DNA]</scope>
    <source>
        <strain>ATCC 204508 / S288c</strain>
    </source>
</reference>
<reference key="5">
    <citation type="journal article" date="2014" name="G3 (Bethesda)">
        <title>The reference genome sequence of Saccharomyces cerevisiae: Then and now.</title>
        <authorList>
            <person name="Engel S.R."/>
            <person name="Dietrich F.S."/>
            <person name="Fisk D.G."/>
            <person name="Binkley G."/>
            <person name="Balakrishnan R."/>
            <person name="Costanzo M.C."/>
            <person name="Dwight S.S."/>
            <person name="Hitz B.C."/>
            <person name="Karra K."/>
            <person name="Nash R.S."/>
            <person name="Weng S."/>
            <person name="Wong E.D."/>
            <person name="Lloyd P."/>
            <person name="Skrzypek M.S."/>
            <person name="Miyasato S.R."/>
            <person name="Simison M."/>
            <person name="Cherry J.M."/>
        </authorList>
    </citation>
    <scope>GENOME REANNOTATION</scope>
    <source>
        <strain>ATCC 204508 / S288c</strain>
    </source>
</reference>
<reference key="6">
    <citation type="journal article" date="2007" name="Genome Res.">
        <title>Approaching a complete repository of sequence-verified protein-encoding clones for Saccharomyces cerevisiae.</title>
        <authorList>
            <person name="Hu Y."/>
            <person name="Rolfs A."/>
            <person name="Bhullar B."/>
            <person name="Murthy T.V.S."/>
            <person name="Zhu C."/>
            <person name="Berger M.F."/>
            <person name="Camargo A.A."/>
            <person name="Kelley F."/>
            <person name="McCarron S."/>
            <person name="Jepson D."/>
            <person name="Richardson A."/>
            <person name="Raphael J."/>
            <person name="Moreira D."/>
            <person name="Taycher E."/>
            <person name="Zuo D."/>
            <person name="Mohr S."/>
            <person name="Kane M.F."/>
            <person name="Williamson J."/>
            <person name="Simpson A.J.G."/>
            <person name="Bulyk M.L."/>
            <person name="Harlow E."/>
            <person name="Marsischky G."/>
            <person name="Kolodner R.D."/>
            <person name="LaBaer J."/>
        </authorList>
    </citation>
    <scope>NUCLEOTIDE SEQUENCE [GENOMIC DNA]</scope>
    <source>
        <strain>ATCC 204508 / S288c</strain>
    </source>
</reference>
<reference key="7">
    <citation type="journal article" date="1994" name="J. Cell Biol.">
        <title>Direct interaction between yeast spindle pole body components: Kar1p is required for Cdc31p localization to the spindle pole body.</title>
        <authorList>
            <person name="Biggins S."/>
            <person name="Rose M.D."/>
        </authorList>
    </citation>
    <scope>FUNCTION</scope>
    <scope>KAR1-DEPENDENT RECRUITMENT TO SPB HALF-BRIDGE</scope>
</reference>
<reference key="8">
    <citation type="journal article" date="1994" name="Genetics">
        <title>Genetic interactions between CDC31 and KAR1, two genes required for duplication of the microtubule organizing center in Saccharomyces cerevisiae.</title>
        <authorList>
            <person name="Vallen E.A."/>
            <person name="Ho W."/>
            <person name="Winey M."/>
            <person name="Rose M.D."/>
        </authorList>
    </citation>
    <scope>FUNCTION</scope>
</reference>
<reference key="9">
    <citation type="journal article" date="1998" name="J. Cell Biol.">
        <title>The yeast centrin, cdc31p, and the interacting protein kinase, Kic1p, are required for cell integrity.</title>
        <authorList>
            <person name="Sullivan D.S."/>
            <person name="Biggins S."/>
            <person name="Rose M.D."/>
        </authorList>
    </citation>
    <scope>FUNCTION</scope>
    <scope>INTERACTION WITH KIC1</scope>
</reference>
<reference key="10">
    <citation type="journal article" date="2000" name="J. Cell Biol.">
        <title>The yeast nuclear pore complex: composition, architecture, and transport mechanism.</title>
        <authorList>
            <person name="Rout M.P."/>
            <person name="Aitchison J.D."/>
            <person name="Suprapto A."/>
            <person name="Hjertaas K."/>
            <person name="Zhao Y."/>
            <person name="Chait B.T."/>
        </authorList>
    </citation>
    <scope>INTERACTION WITH THE NUCLEAR PORE COMPLEX</scope>
    <scope>SUBCELLULAR LOCATION</scope>
</reference>
<reference key="11">
    <citation type="journal article" date="2001" name="Genetics">
        <title>Fine structure analysis of the yeast centrin, Cdc31p, identifies residues specific for cell morphology and spindle pole body duplication.</title>
        <authorList>
            <person name="Ivanovska I."/>
            <person name="Rose M.D."/>
        </authorList>
    </citation>
    <scope>FUNCTION</scope>
    <scope>CELL MORPHOLOGY</scope>
    <scope>MUTAGENESIS</scope>
    <scope>STRUCTURE PREDICTION</scope>
</reference>
<reference key="12">
    <citation type="journal article" date="2002" name="J. Cell Biol.">
        <title>Mps3p is a novel component of the yeast spindle pole body that interacts with the yeast centrin homologue Cdc31p.</title>
        <authorList>
            <person name="Jaspersen S.L."/>
            <person name="Giddings T.H. Jr."/>
            <person name="Winey M."/>
        </authorList>
    </citation>
    <scope>FUNCTION</scope>
    <scope>INTERACTION WITH MPS3 AT THE SPB</scope>
</reference>
<reference key="13">
    <citation type="journal article" date="2003" name="J. Cell Biol.">
        <title>Sfi1p has conserved centrin-binding sites and an essential function in budding yeast spindle pole body duplication.</title>
        <authorList>
            <person name="Kilmartin J.V."/>
        </authorList>
    </citation>
    <scope>FUNCTION</scope>
    <scope>INTERACTION WITH SFI1 AT THE SPB</scope>
</reference>
<reference key="14">
    <citation type="journal article" date="2002" name="Curr. Genet.">
        <title>Composition of the spindle pole body of Saccharomyces cerevisiae and the proteins involved in its duplication.</title>
        <authorList>
            <person name="Helfant A.H."/>
        </authorList>
    </citation>
    <scope>REVIEW</scope>
</reference>
<reference key="15">
    <citation type="journal article" date="2003" name="Dev. Cell">
        <title>Peering through the pore: nuclear pore complex structure, assembly, and function.</title>
        <authorList>
            <person name="Suntharalingam M."/>
            <person name="Wente S.R."/>
        </authorList>
    </citation>
    <scope>REVIEW</scope>
</reference>
<reference key="16">
    <citation type="journal article" date="2008" name="Mol. Cell. Proteomics">
        <title>A multidimensional chromatography technology for in-depth phosphoproteome analysis.</title>
        <authorList>
            <person name="Albuquerque C.P."/>
            <person name="Smolka M.B."/>
            <person name="Payne S.H."/>
            <person name="Bafna V."/>
            <person name="Eng J."/>
            <person name="Zhou H."/>
        </authorList>
    </citation>
    <scope>PHOSPHORYLATION [LARGE SCALE ANALYSIS] AT THR-130</scope>
    <scope>IDENTIFICATION BY MASS SPECTROMETRY [LARGE SCALE ANALYSIS]</scope>
</reference>
<reference key="17">
    <citation type="journal article" date="2017" name="J. Cell Biol.">
        <title>The Vps13p-Cdc31p complex is directly required for TGN late endosome transport and TGN homotypic fusion.</title>
        <authorList>
            <person name="De M."/>
            <person name="Oleskie A.N."/>
            <person name="Ayyash M."/>
            <person name="Dutta S."/>
            <person name="Mancour L."/>
            <person name="Abazeed M.E."/>
            <person name="Brace E.J."/>
            <person name="Skiniotis G."/>
            <person name="Fuller R.S."/>
        </authorList>
    </citation>
    <scope>FUNCTION</scope>
    <scope>INTERACTION WITH VPS13</scope>
</reference>
<accession>P06704</accession>
<accession>D6W2V8</accession>
<evidence type="ECO:0000255" key="1">
    <source>
        <dbReference type="PROSITE-ProRule" id="PRU00448"/>
    </source>
</evidence>
<evidence type="ECO:0000269" key="2">
    <source>
    </source>
</evidence>
<evidence type="ECO:0000269" key="3">
    <source>
    </source>
</evidence>
<evidence type="ECO:0000269" key="4">
    <source>
    </source>
</evidence>
<evidence type="ECO:0000269" key="5">
    <source>
    </source>
</evidence>
<evidence type="ECO:0000269" key="6">
    <source>
    </source>
</evidence>
<evidence type="ECO:0000269" key="7">
    <source>
    </source>
</evidence>
<evidence type="ECO:0000269" key="8">
    <source>
    </source>
</evidence>
<evidence type="ECO:0000269" key="9">
    <source>
    </source>
</evidence>
<evidence type="ECO:0000305" key="10"/>
<evidence type="ECO:0007744" key="11">
    <source>
    </source>
</evidence>
<evidence type="ECO:0007829" key="12">
    <source>
        <dbReference type="PDB" id="3FWB"/>
    </source>
</evidence>